<evidence type="ECO:0000255" key="1">
    <source>
        <dbReference type="HAMAP-Rule" id="MF_00303"/>
    </source>
</evidence>
<reference key="1">
    <citation type="journal article" date="2011" name="J. Bacteriol.">
        <title>Complete genome sequence of the Thermophilic Bacterium Exiguobacterium sp. AT1b.</title>
        <authorList>
            <person name="Vishnivetskaya T.A."/>
            <person name="Lucas S."/>
            <person name="Copeland A."/>
            <person name="Lapidus A."/>
            <person name="Glavina del Rio T."/>
            <person name="Dalin E."/>
            <person name="Tice H."/>
            <person name="Bruce D.C."/>
            <person name="Goodwin L.A."/>
            <person name="Pitluck S."/>
            <person name="Saunders E."/>
            <person name="Brettin T."/>
            <person name="Detter C."/>
            <person name="Han C."/>
            <person name="Larimer F."/>
            <person name="Land M.L."/>
            <person name="Hauser L.J."/>
            <person name="Kyrpides N.C."/>
            <person name="Ovchinnikova G."/>
            <person name="Kathariou S."/>
            <person name="Ramaley R.F."/>
            <person name="Rodrigues D.F."/>
            <person name="Hendrix C."/>
            <person name="Richardson P."/>
            <person name="Tiedje J.M."/>
        </authorList>
    </citation>
    <scope>NUCLEOTIDE SEQUENCE [LARGE SCALE GENOMIC DNA]</scope>
    <source>
        <strain>ATCC BAA-1283 / AT1b</strain>
    </source>
</reference>
<feature type="chain" id="PRO_1000204989" description="Trigger factor">
    <location>
        <begin position="1"/>
        <end position="430"/>
    </location>
</feature>
<feature type="domain" description="PPIase FKBP-type" evidence="1">
    <location>
        <begin position="163"/>
        <end position="248"/>
    </location>
</feature>
<dbReference type="EC" id="5.2.1.8" evidence="1"/>
<dbReference type="EMBL" id="CP001615">
    <property type="protein sequence ID" value="ACQ71553.1"/>
    <property type="molecule type" value="Genomic_DNA"/>
</dbReference>
<dbReference type="RefSeq" id="WP_015881112.1">
    <property type="nucleotide sequence ID" value="NC_012673.1"/>
</dbReference>
<dbReference type="SMR" id="C4L4J0"/>
<dbReference type="STRING" id="360911.EAT1b_2637"/>
<dbReference type="GeneID" id="94372700"/>
<dbReference type="KEGG" id="eat:EAT1b_2637"/>
<dbReference type="eggNOG" id="COG0544">
    <property type="taxonomic scope" value="Bacteria"/>
</dbReference>
<dbReference type="HOGENOM" id="CLU_033058_3_2_9"/>
<dbReference type="OrthoDB" id="9767721at2"/>
<dbReference type="Proteomes" id="UP000000716">
    <property type="component" value="Chromosome"/>
</dbReference>
<dbReference type="GO" id="GO:0005737">
    <property type="term" value="C:cytoplasm"/>
    <property type="evidence" value="ECO:0007669"/>
    <property type="project" value="UniProtKB-SubCell"/>
</dbReference>
<dbReference type="GO" id="GO:0003755">
    <property type="term" value="F:peptidyl-prolyl cis-trans isomerase activity"/>
    <property type="evidence" value="ECO:0007669"/>
    <property type="project" value="UniProtKB-UniRule"/>
</dbReference>
<dbReference type="GO" id="GO:0044183">
    <property type="term" value="F:protein folding chaperone"/>
    <property type="evidence" value="ECO:0007669"/>
    <property type="project" value="TreeGrafter"/>
</dbReference>
<dbReference type="GO" id="GO:0043022">
    <property type="term" value="F:ribosome binding"/>
    <property type="evidence" value="ECO:0007669"/>
    <property type="project" value="TreeGrafter"/>
</dbReference>
<dbReference type="GO" id="GO:0051083">
    <property type="term" value="P:'de novo' cotranslational protein folding"/>
    <property type="evidence" value="ECO:0007669"/>
    <property type="project" value="TreeGrafter"/>
</dbReference>
<dbReference type="GO" id="GO:0051301">
    <property type="term" value="P:cell division"/>
    <property type="evidence" value="ECO:0007669"/>
    <property type="project" value="UniProtKB-KW"/>
</dbReference>
<dbReference type="GO" id="GO:0061077">
    <property type="term" value="P:chaperone-mediated protein folding"/>
    <property type="evidence" value="ECO:0007669"/>
    <property type="project" value="TreeGrafter"/>
</dbReference>
<dbReference type="GO" id="GO:0015031">
    <property type="term" value="P:protein transport"/>
    <property type="evidence" value="ECO:0007669"/>
    <property type="project" value="UniProtKB-UniRule"/>
</dbReference>
<dbReference type="GO" id="GO:0043335">
    <property type="term" value="P:protein unfolding"/>
    <property type="evidence" value="ECO:0007669"/>
    <property type="project" value="TreeGrafter"/>
</dbReference>
<dbReference type="FunFam" id="3.10.50.40:FF:000001">
    <property type="entry name" value="Trigger factor"/>
    <property type="match status" value="1"/>
</dbReference>
<dbReference type="Gene3D" id="3.10.50.40">
    <property type="match status" value="1"/>
</dbReference>
<dbReference type="Gene3D" id="3.30.70.1050">
    <property type="entry name" value="Trigger factor ribosome-binding domain"/>
    <property type="match status" value="1"/>
</dbReference>
<dbReference type="Gene3D" id="1.10.3120.10">
    <property type="entry name" value="Trigger factor, C-terminal domain"/>
    <property type="match status" value="1"/>
</dbReference>
<dbReference type="HAMAP" id="MF_00303">
    <property type="entry name" value="Trigger_factor_Tig"/>
    <property type="match status" value="1"/>
</dbReference>
<dbReference type="InterPro" id="IPR046357">
    <property type="entry name" value="PPIase_dom_sf"/>
</dbReference>
<dbReference type="InterPro" id="IPR001179">
    <property type="entry name" value="PPIase_FKBP_dom"/>
</dbReference>
<dbReference type="InterPro" id="IPR005215">
    <property type="entry name" value="Trig_fac"/>
</dbReference>
<dbReference type="InterPro" id="IPR008880">
    <property type="entry name" value="Trigger_fac_C"/>
</dbReference>
<dbReference type="InterPro" id="IPR037041">
    <property type="entry name" value="Trigger_fac_C_sf"/>
</dbReference>
<dbReference type="InterPro" id="IPR008881">
    <property type="entry name" value="Trigger_fac_ribosome-bd_bac"/>
</dbReference>
<dbReference type="InterPro" id="IPR036611">
    <property type="entry name" value="Trigger_fac_ribosome-bd_sf"/>
</dbReference>
<dbReference type="InterPro" id="IPR027304">
    <property type="entry name" value="Trigger_fact/SurA_dom_sf"/>
</dbReference>
<dbReference type="NCBIfam" id="TIGR00115">
    <property type="entry name" value="tig"/>
    <property type="match status" value="1"/>
</dbReference>
<dbReference type="PANTHER" id="PTHR30560">
    <property type="entry name" value="TRIGGER FACTOR CHAPERONE AND PEPTIDYL-PROLYL CIS/TRANS ISOMERASE"/>
    <property type="match status" value="1"/>
</dbReference>
<dbReference type="PANTHER" id="PTHR30560:SF3">
    <property type="entry name" value="TRIGGER FACTOR-LIKE PROTEIN TIG, CHLOROPLASTIC"/>
    <property type="match status" value="1"/>
</dbReference>
<dbReference type="Pfam" id="PF00254">
    <property type="entry name" value="FKBP_C"/>
    <property type="match status" value="1"/>
</dbReference>
<dbReference type="Pfam" id="PF05698">
    <property type="entry name" value="Trigger_C"/>
    <property type="match status" value="1"/>
</dbReference>
<dbReference type="Pfam" id="PF05697">
    <property type="entry name" value="Trigger_N"/>
    <property type="match status" value="1"/>
</dbReference>
<dbReference type="PIRSF" id="PIRSF003095">
    <property type="entry name" value="Trigger_factor"/>
    <property type="match status" value="1"/>
</dbReference>
<dbReference type="SUPFAM" id="SSF54534">
    <property type="entry name" value="FKBP-like"/>
    <property type="match status" value="1"/>
</dbReference>
<dbReference type="SUPFAM" id="SSF109998">
    <property type="entry name" value="Triger factor/SurA peptide-binding domain-like"/>
    <property type="match status" value="1"/>
</dbReference>
<dbReference type="SUPFAM" id="SSF102735">
    <property type="entry name" value="Trigger factor ribosome-binding domain"/>
    <property type="match status" value="1"/>
</dbReference>
<dbReference type="PROSITE" id="PS50059">
    <property type="entry name" value="FKBP_PPIASE"/>
    <property type="match status" value="1"/>
</dbReference>
<keyword id="KW-0131">Cell cycle</keyword>
<keyword id="KW-0132">Cell division</keyword>
<keyword id="KW-0143">Chaperone</keyword>
<keyword id="KW-0963">Cytoplasm</keyword>
<keyword id="KW-0413">Isomerase</keyword>
<keyword id="KW-0697">Rotamase</keyword>
<sequence>MTAKWEKTSGSQGVLTYEAPAEAFDKAVDAAFKTVVKDLNVPGFRKGKLPRPMFNKMYGEEALYQDALDILYRDTIQGAVEEAGFEPIALENIDVDGTLEKGKPVAFKVTFVVEPEAELGEYKGLEYEAVSTEVTEDEVTAELEALQQQGAELAVKEGAIENGDTAVFDFAGFADGEQFEGGTAENYTLEIGSGQFIPGFEEQMIGMTAGEEKDVEVTFPEEYHAENLAGKPATFKVKLHEVKTKQVPELDDEFAKDIDESVSTLDELKASIRERLEAGKKQEAEGTMRDQLVEQATANATIDVPEVLVEQEVDRMVQEFGSRVSSQGIDLNMYFELTGTSEEAMREEMKEQAEERVKARLVLKAIADKEAIEVSDEDAEKELEEMSKLYNIAPDQLRTMLAPQGGLETLKGDLKFRKAIDILVENGKAK</sequence>
<gene>
    <name evidence="1" type="primary">tig</name>
    <name type="ordered locus">EAT1b_2637</name>
</gene>
<accession>C4L4J0</accession>
<comment type="function">
    <text evidence="1">Involved in protein export. Acts as a chaperone by maintaining the newly synthesized protein in an open conformation. Functions as a peptidyl-prolyl cis-trans isomerase.</text>
</comment>
<comment type="catalytic activity">
    <reaction evidence="1">
        <text>[protein]-peptidylproline (omega=180) = [protein]-peptidylproline (omega=0)</text>
        <dbReference type="Rhea" id="RHEA:16237"/>
        <dbReference type="Rhea" id="RHEA-COMP:10747"/>
        <dbReference type="Rhea" id="RHEA-COMP:10748"/>
        <dbReference type="ChEBI" id="CHEBI:83833"/>
        <dbReference type="ChEBI" id="CHEBI:83834"/>
        <dbReference type="EC" id="5.2.1.8"/>
    </reaction>
</comment>
<comment type="subcellular location">
    <subcellularLocation>
        <location>Cytoplasm</location>
    </subcellularLocation>
    <text evidence="1">About half TF is bound to the ribosome near the polypeptide exit tunnel while the other half is free in the cytoplasm.</text>
</comment>
<comment type="domain">
    <text evidence="1">Consists of 3 domains; the N-terminus binds the ribosome, the middle domain has PPIase activity, while the C-terminus has intrinsic chaperone activity on its own.</text>
</comment>
<comment type="similarity">
    <text evidence="1">Belongs to the FKBP-type PPIase family. Tig subfamily.</text>
</comment>
<organism>
    <name type="scientific">Exiguobacterium sp. (strain ATCC BAA-1283 / AT1b)</name>
    <dbReference type="NCBI Taxonomy" id="360911"/>
    <lineage>
        <taxon>Bacteria</taxon>
        <taxon>Bacillati</taxon>
        <taxon>Bacillota</taxon>
        <taxon>Bacilli</taxon>
        <taxon>Bacillales</taxon>
        <taxon>Bacillales Family XII. Incertae Sedis</taxon>
        <taxon>Exiguobacterium</taxon>
    </lineage>
</organism>
<protein>
    <recommendedName>
        <fullName evidence="1">Trigger factor</fullName>
        <shortName evidence="1">TF</shortName>
        <ecNumber evidence="1">5.2.1.8</ecNumber>
    </recommendedName>
    <alternativeName>
        <fullName evidence="1">PPIase</fullName>
    </alternativeName>
</protein>
<name>TIG_EXISA</name>
<proteinExistence type="inferred from homology"/>